<gene>
    <name evidence="10" type="primary">wtf35</name>
</gene>
<comment type="function">
    <text evidence="5 6">Promotes unequal transmission of alleles from the parental zygote to progeny spores by acting as poison/antidote system where the poison and antidote proteins are produced from the same locus; the poison component is trans-acting and targets all spores within an ascus whereas the antidote component is spore-specific, leading to poisoning of all progeny that do not inherit the allele.</text>
</comment>
<comment type="function">
    <molecule>Isoform 1</molecule>
    <text evidence="1">Localizes isoform 2 to the vacuole thereby facilitating its degradation.</text>
</comment>
<comment type="function">
    <molecule>Isoform 2</molecule>
    <text evidence="1">Forms toxic aggregates that disrupt spore maturation.</text>
</comment>
<comment type="subunit">
    <text evidence="1 2">Homomer (By similarity). Forms protein aggregates (By similarity). The two isoforms can interact with each other and with themselves (By similarity). High sequence similarity is required for their interaction (By similarity).</text>
</comment>
<comment type="subcellular location">
    <molecule>Isoform 1</molecule>
    <subcellularLocation>
        <location evidence="3 5">Spore membrane</location>
        <topology evidence="3">Multi-pass membrane protein</topology>
    </subcellularLocation>
    <subcellularLocation>
        <location evidence="1 3">Vacuole membrane</location>
        <topology evidence="3">Multi-pass membrane protein</topology>
    </subcellularLocation>
    <text evidence="1">Contained within spores expressing the isoform and localizes isoform 2 to the vacuole.</text>
</comment>
<comment type="subcellular location">
    <molecule>Isoform 2</molecule>
    <subcellularLocation>
        <location evidence="1">Ascus epiplasm</location>
    </subcellularLocation>
    <subcellularLocation>
        <location evidence="1">Cytoplasm</location>
    </subcellularLocation>
    <subcellularLocation>
        <location evidence="3 5">Spore membrane</location>
        <topology evidence="3">Multi-pass membrane protein</topology>
    </subcellularLocation>
    <subcellularLocation>
        <location evidence="1 3">Vacuole membrane</location>
        <topology evidence="3">Multi-pass membrane protein</topology>
    </subcellularLocation>
    <subcellularLocation>
        <location evidence="1 3">Endoplasmic reticulum membrane</location>
        <topology evidence="3">Multi-pass membrane protein</topology>
    </subcellularLocation>
    <text evidence="1">Localizes in trans to all spores within an ascus. Localization to the spore vacuole is dependent on isoform 1.</text>
</comment>
<comment type="alternative products">
    <event type="alternative initiation"/>
    <isoform>
        <id>A0A482ARP7-1</id>
        <name>1</name>
        <name evidence="7">Antidote</name>
        <name evidence="9">Suppressor</name>
        <sequence type="displayed"/>
    </isoform>
    <isoform>
        <id>A0A482ARP7-2</id>
        <name>2</name>
        <name evidence="7">Poison</name>
        <sequence type="described" ref="VSP_060940"/>
    </isoform>
</comment>
<comment type="similarity">
    <text evidence="9">Belongs to the WTF family.</text>
</comment>
<reference evidence="10" key="1">
    <citation type="journal article" date="2020" name="PLoS Genet.">
        <title>Dramatically diverse Schizosaccharomyces pombe wtf meiotic drivers all display high gamete-killing efficiency.</title>
        <authorList>
            <person name="Bravo Nunez M.A."/>
            <person name="Sabbarini I.M."/>
            <person name="Eickbush M.T."/>
            <person name="Liang Y."/>
            <person name="Lange J.J."/>
            <person name="Kent A.M."/>
            <person name="Zanders S.E."/>
        </authorList>
    </citation>
    <scope>NUCLEOTIDE SEQUENCE [GENOMIC DNA]</scope>
    <scope>FUNCTION</scope>
    <scope>ALTERNATIVE INITIATION (ISOFORMS 1 AND 2)</scope>
    <scope>SUBCELLULAR LOCATION</scope>
    <source>
        <strain evidence="10">FY29033</strain>
    </source>
</reference>
<reference evidence="9" key="2">
    <citation type="journal article" date="2020" name="Elife">
        <title>Atypical meiosis can be adaptive in outcrossed Schizosaccharomyces pombe due to wtf meiotic drivers.</title>
        <authorList>
            <person name="Bravo Nunez M.A."/>
            <person name="Sabbarini I.M."/>
            <person name="Eide L.E."/>
            <person name="Unckless R.L."/>
            <person name="Zanders S.E."/>
        </authorList>
    </citation>
    <scope>FUNCTION</scope>
    <source>
        <strain evidence="8">FY29033</strain>
    </source>
</reference>
<proteinExistence type="inferred from homology"/>
<feature type="chain" id="PRO_0000452273" description="Meiotic driver wtf35">
    <location>
        <begin position="1"/>
        <end position="280"/>
    </location>
</feature>
<feature type="transmembrane region" description="Helical" evidence="3">
    <location>
        <begin position="105"/>
        <end position="125"/>
    </location>
</feature>
<feature type="transmembrane region" description="Helical" evidence="3">
    <location>
        <begin position="142"/>
        <end position="162"/>
    </location>
</feature>
<feature type="transmembrane region" description="Helical" evidence="3">
    <location>
        <begin position="184"/>
        <end position="204"/>
    </location>
</feature>
<feature type="transmembrane region" description="Helical" evidence="3">
    <location>
        <begin position="218"/>
        <end position="238"/>
    </location>
</feature>
<feature type="region of interest" description="Disordered" evidence="4">
    <location>
        <begin position="1"/>
        <end position="49"/>
    </location>
</feature>
<feature type="region of interest" description="Disordered" evidence="4">
    <location>
        <begin position="64"/>
        <end position="100"/>
    </location>
</feature>
<feature type="compositionally biased region" description="Basic and acidic residues" evidence="4">
    <location>
        <begin position="1"/>
        <end position="29"/>
    </location>
</feature>
<feature type="splice variant" id="VSP_060940" description="In isoform 2." evidence="5">
    <location>
        <begin position="1"/>
        <end position="52"/>
    </location>
</feature>
<protein>
    <recommendedName>
        <fullName evidence="7">Meiotic driver wtf35</fullName>
    </recommendedName>
</protein>
<sequence length="280" mass="31957">MKNKDYPLRTSMDELSTKNDNEIDLEKGPLPEYNSEDGSTLPPYSDLNNPKQMGQNITKLFNWNKSTTPPDYDENRLPITDEGNNPPNTHRENHSSGTTDNSSPFLIKLLISFTSIILFNAPAVCYLKYKDAFFKNYGAAEWTLIGFWCASSLIIFTFSWYFYETWTKAVGKGIKHFLKKWRNIPMAFSEVFLFNILVGSPRVALRHISGERWGLKCSLADHIIFAILSILVFIVETVEPGSSKINIMKRLRGDNARDATQHVNEYTAVPLREMNPESEA</sequence>
<accession>A0A482ARP7</accession>
<dbReference type="EMBL" id="MH837223">
    <property type="protein sequence ID" value="QBL54289.1"/>
    <property type="molecule type" value="Genomic_DNA"/>
</dbReference>
<dbReference type="VEuPathDB" id="FungiDB:SPCC553.05c"/>
<dbReference type="GO" id="GO:0072324">
    <property type="term" value="C:ascus epiplasm"/>
    <property type="evidence" value="ECO:0000305"/>
    <property type="project" value="UniProtKB"/>
</dbReference>
<dbReference type="GO" id="GO:0005737">
    <property type="term" value="C:cytoplasm"/>
    <property type="evidence" value="ECO:0000314"/>
    <property type="project" value="UniProtKB"/>
</dbReference>
<dbReference type="GO" id="GO:0005789">
    <property type="term" value="C:endoplasmic reticulum membrane"/>
    <property type="evidence" value="ECO:0007669"/>
    <property type="project" value="UniProtKB-SubCell"/>
</dbReference>
<dbReference type="GO" id="GO:0005774">
    <property type="term" value="C:vacuolar membrane"/>
    <property type="evidence" value="ECO:0007669"/>
    <property type="project" value="UniProtKB-SubCell"/>
</dbReference>
<dbReference type="GO" id="GO:0110134">
    <property type="term" value="P:meiotic drive"/>
    <property type="evidence" value="ECO:0000314"/>
    <property type="project" value="UniProtKB"/>
</dbReference>
<dbReference type="InterPro" id="IPR004982">
    <property type="entry name" value="WTF"/>
</dbReference>
<dbReference type="Pfam" id="PF03303">
    <property type="entry name" value="WTF"/>
    <property type="match status" value="1"/>
</dbReference>
<organism evidence="10">
    <name type="scientific">Schizosaccharomyces pombe</name>
    <name type="common">Fission yeast</name>
    <dbReference type="NCBI Taxonomy" id="4896"/>
    <lineage>
        <taxon>Eukaryota</taxon>
        <taxon>Fungi</taxon>
        <taxon>Dikarya</taxon>
        <taxon>Ascomycota</taxon>
        <taxon>Taphrinomycotina</taxon>
        <taxon>Schizosaccharomycetes</taxon>
        <taxon>Schizosaccharomycetales</taxon>
        <taxon>Schizosaccharomycetaceae</taxon>
        <taxon>Schizosaccharomyces</taxon>
    </lineage>
</organism>
<evidence type="ECO:0000250" key="1">
    <source>
        <dbReference type="UniProtKB" id="A0A218N034"/>
    </source>
</evidence>
<evidence type="ECO:0000250" key="2">
    <source>
        <dbReference type="UniProtKB" id="O74420"/>
    </source>
</evidence>
<evidence type="ECO:0000255" key="3"/>
<evidence type="ECO:0000256" key="4">
    <source>
        <dbReference type="SAM" id="MobiDB-lite"/>
    </source>
</evidence>
<evidence type="ECO:0000269" key="5">
    <source>
    </source>
</evidence>
<evidence type="ECO:0000269" key="6">
    <source>
    </source>
</evidence>
<evidence type="ECO:0000303" key="7">
    <source>
    </source>
</evidence>
<evidence type="ECO:0000303" key="8">
    <source>
    </source>
</evidence>
<evidence type="ECO:0000305" key="9"/>
<evidence type="ECO:0000312" key="10">
    <source>
        <dbReference type="EMBL" id="QBL54289.1"/>
    </source>
</evidence>
<name>WTF35_SCHPM</name>
<keyword id="KW-0024">Alternative initiation</keyword>
<keyword id="KW-0963">Cytoplasm</keyword>
<keyword id="KW-0256">Endoplasmic reticulum</keyword>
<keyword id="KW-0472">Membrane</keyword>
<keyword id="KW-0800">Toxin</keyword>
<keyword id="KW-0812">Transmembrane</keyword>
<keyword id="KW-1133">Transmembrane helix</keyword>
<keyword id="KW-0926">Vacuole</keyword>